<organism>
    <name type="scientific">Halobacterium salinarum (strain ATCC 29341 / DSM 671 / R1)</name>
    <dbReference type="NCBI Taxonomy" id="478009"/>
    <lineage>
        <taxon>Archaea</taxon>
        <taxon>Methanobacteriati</taxon>
        <taxon>Methanobacteriota</taxon>
        <taxon>Stenosarchaea group</taxon>
        <taxon>Halobacteria</taxon>
        <taxon>Halobacteriales</taxon>
        <taxon>Halobacteriaceae</taxon>
        <taxon>Halobacterium</taxon>
        <taxon>Halobacterium salinarum NRC-34001</taxon>
    </lineage>
</organism>
<name>RL21_HALS3</name>
<comment type="similarity">
    <text evidence="1">Belongs to the eukaryotic ribosomal protein eL21 family.</text>
</comment>
<accession>B0R509</accession>
<protein>
    <recommendedName>
        <fullName evidence="1">Large ribosomal subunit protein eL21</fullName>
    </recommendedName>
    <alternativeName>
        <fullName evidence="3">50S ribosomal protein L21e</fullName>
    </alternativeName>
</protein>
<keyword id="KW-0687">Ribonucleoprotein</keyword>
<keyword id="KW-0689">Ribosomal protein</keyword>
<dbReference type="EMBL" id="AM774415">
    <property type="protein sequence ID" value="CAP13824.1"/>
    <property type="molecule type" value="Genomic_DNA"/>
</dbReference>
<dbReference type="RefSeq" id="WP_010902842.1">
    <property type="nucleotide sequence ID" value="NC_010364.1"/>
</dbReference>
<dbReference type="SMR" id="B0R509"/>
<dbReference type="EnsemblBacteria" id="CAP13824">
    <property type="protein sequence ID" value="CAP13824"/>
    <property type="gene ID" value="OE_2679R"/>
</dbReference>
<dbReference type="KEGG" id="hsl:OE_2679R"/>
<dbReference type="HOGENOM" id="CLU_103610_1_1_2"/>
<dbReference type="PhylomeDB" id="B0R509"/>
<dbReference type="Proteomes" id="UP000001321">
    <property type="component" value="Chromosome"/>
</dbReference>
<dbReference type="GO" id="GO:1990904">
    <property type="term" value="C:ribonucleoprotein complex"/>
    <property type="evidence" value="ECO:0007669"/>
    <property type="project" value="UniProtKB-KW"/>
</dbReference>
<dbReference type="GO" id="GO:0005840">
    <property type="term" value="C:ribosome"/>
    <property type="evidence" value="ECO:0007669"/>
    <property type="project" value="UniProtKB-KW"/>
</dbReference>
<dbReference type="GO" id="GO:0003735">
    <property type="term" value="F:structural constituent of ribosome"/>
    <property type="evidence" value="ECO:0007669"/>
    <property type="project" value="InterPro"/>
</dbReference>
<dbReference type="GO" id="GO:0006412">
    <property type="term" value="P:translation"/>
    <property type="evidence" value="ECO:0007669"/>
    <property type="project" value="UniProtKB-UniRule"/>
</dbReference>
<dbReference type="Gene3D" id="2.30.30.70">
    <property type="entry name" value="Ribosomal protein L21"/>
    <property type="match status" value="1"/>
</dbReference>
<dbReference type="HAMAP" id="MF_00369">
    <property type="entry name" value="Ribosomal_eL21"/>
    <property type="match status" value="1"/>
</dbReference>
<dbReference type="InterPro" id="IPR001147">
    <property type="entry name" value="Ribosomal_eL21"/>
</dbReference>
<dbReference type="InterPro" id="IPR022856">
    <property type="entry name" value="Ribosomal_eL21_arc"/>
</dbReference>
<dbReference type="InterPro" id="IPR018259">
    <property type="entry name" value="Ribosomal_eL21_CS"/>
</dbReference>
<dbReference type="InterPro" id="IPR036948">
    <property type="entry name" value="Ribosomal_eL21_sf"/>
</dbReference>
<dbReference type="InterPro" id="IPR008991">
    <property type="entry name" value="Translation_prot_SH3-like_sf"/>
</dbReference>
<dbReference type="NCBIfam" id="NF003303">
    <property type="entry name" value="PRK04306.1"/>
    <property type="match status" value="1"/>
</dbReference>
<dbReference type="Pfam" id="PF01157">
    <property type="entry name" value="Ribosomal_L21e"/>
    <property type="match status" value="1"/>
</dbReference>
<dbReference type="SUPFAM" id="SSF50104">
    <property type="entry name" value="Translation proteins SH3-like domain"/>
    <property type="match status" value="1"/>
</dbReference>
<dbReference type="PROSITE" id="PS01171">
    <property type="entry name" value="RIBOSOMAL_L21E"/>
    <property type="match status" value="1"/>
</dbReference>
<feature type="chain" id="PRO_1000121514" description="Large ribosomal subunit protein eL21">
    <location>
        <begin position="1"/>
        <end position="99"/>
    </location>
</feature>
<feature type="region of interest" description="Disordered" evidence="2">
    <location>
        <begin position="1"/>
        <end position="38"/>
    </location>
</feature>
<feature type="compositionally biased region" description="Polar residues" evidence="2">
    <location>
        <begin position="1"/>
        <end position="14"/>
    </location>
</feature>
<reference key="1">
    <citation type="journal article" date="2008" name="Genomics">
        <title>Evolution in the laboratory: the genome of Halobacterium salinarum strain R1 compared to that of strain NRC-1.</title>
        <authorList>
            <person name="Pfeiffer F."/>
            <person name="Schuster S.C."/>
            <person name="Broicher A."/>
            <person name="Falb M."/>
            <person name="Palm P."/>
            <person name="Rodewald K."/>
            <person name="Ruepp A."/>
            <person name="Soppa J."/>
            <person name="Tittor J."/>
            <person name="Oesterhelt D."/>
        </authorList>
    </citation>
    <scope>NUCLEOTIDE SEQUENCE [LARGE SCALE GENOMIC DNA]</scope>
    <source>
        <strain>ATCC 29341 / DSM 671 / R1</strain>
    </source>
</reference>
<sequence>MPNSNGPLSNSGGKLQNDPRDRGTSPPQRAIADYDDGESVHLTLDPSVQDGRFHPRFSGLTGTVVGTQGDAFKVEVNDGGMDKTLIVGAAHLRTQRQEE</sequence>
<gene>
    <name evidence="1" type="primary">rpl21e</name>
    <name type="ordered locus">OE_2679R</name>
</gene>
<evidence type="ECO:0000255" key="1">
    <source>
        <dbReference type="HAMAP-Rule" id="MF_00369"/>
    </source>
</evidence>
<evidence type="ECO:0000256" key="2">
    <source>
        <dbReference type="SAM" id="MobiDB-lite"/>
    </source>
</evidence>
<evidence type="ECO:0000305" key="3"/>
<proteinExistence type="inferred from homology"/>